<gene>
    <name evidence="1" type="primary">queF</name>
    <name type="ordered locus">APJL_0854</name>
</gene>
<accession>B0BPC7</accession>
<comment type="function">
    <text evidence="1">Catalyzes the NADPH-dependent reduction of 7-cyano-7-deazaguanine (preQ0) to 7-aminomethyl-7-deazaguanine (preQ1).</text>
</comment>
<comment type="catalytic activity">
    <reaction evidence="1">
        <text>7-aminomethyl-7-carbaguanine + 2 NADP(+) = 7-cyano-7-deazaguanine + 2 NADPH + 3 H(+)</text>
        <dbReference type="Rhea" id="RHEA:13409"/>
        <dbReference type="ChEBI" id="CHEBI:15378"/>
        <dbReference type="ChEBI" id="CHEBI:45075"/>
        <dbReference type="ChEBI" id="CHEBI:57783"/>
        <dbReference type="ChEBI" id="CHEBI:58349"/>
        <dbReference type="ChEBI" id="CHEBI:58703"/>
        <dbReference type="EC" id="1.7.1.13"/>
    </reaction>
</comment>
<comment type="pathway">
    <text evidence="1">tRNA modification; tRNA-queuosine biosynthesis.</text>
</comment>
<comment type="subunit">
    <text evidence="1">Homodimer.</text>
</comment>
<comment type="subcellular location">
    <subcellularLocation>
        <location evidence="1">Cytoplasm</location>
    </subcellularLocation>
</comment>
<comment type="similarity">
    <text evidence="1">Belongs to the GTP cyclohydrolase I family. QueF type 2 subfamily.</text>
</comment>
<protein>
    <recommendedName>
        <fullName evidence="1">NADPH-dependent 7-cyano-7-deazaguanine reductase</fullName>
        <ecNumber evidence="1">1.7.1.13</ecNumber>
    </recommendedName>
    <alternativeName>
        <fullName evidence="1">7-cyano-7-carbaguanine reductase</fullName>
    </alternativeName>
    <alternativeName>
        <fullName evidence="1">NADPH-dependent nitrile oxidoreductase</fullName>
    </alternativeName>
    <alternativeName>
        <fullName evidence="1">PreQ(0) reductase</fullName>
    </alternativeName>
</protein>
<reference key="1">
    <citation type="journal article" date="2008" name="PLoS ONE">
        <title>Genome biology of Actinobacillus pleuropneumoniae JL03, an isolate of serotype 3 prevalent in China.</title>
        <authorList>
            <person name="Xu Z."/>
            <person name="Zhou Y."/>
            <person name="Li L."/>
            <person name="Zhou R."/>
            <person name="Xiao S."/>
            <person name="Wan Y."/>
            <person name="Zhang S."/>
            <person name="Wang K."/>
            <person name="Li W."/>
            <person name="Li L."/>
            <person name="Jin H."/>
            <person name="Kang M."/>
            <person name="Dalai B."/>
            <person name="Li T."/>
            <person name="Liu L."/>
            <person name="Cheng Y."/>
            <person name="Zhang L."/>
            <person name="Xu T."/>
            <person name="Zheng H."/>
            <person name="Pu S."/>
            <person name="Wang B."/>
            <person name="Gu W."/>
            <person name="Zhang X.L."/>
            <person name="Zhu G.-F."/>
            <person name="Wang S."/>
            <person name="Zhao G.-P."/>
            <person name="Chen H."/>
        </authorList>
    </citation>
    <scope>NUCLEOTIDE SEQUENCE [LARGE SCALE GENOMIC DNA]</scope>
    <source>
        <strain>JL03</strain>
    </source>
</reference>
<name>QUEF_ACTPJ</name>
<feature type="chain" id="PRO_1000193209" description="NADPH-dependent 7-cyano-7-deazaguanine reductase">
    <location>
        <begin position="1"/>
        <end position="279"/>
    </location>
</feature>
<feature type="active site" description="Thioimide intermediate" evidence="1">
    <location>
        <position position="187"/>
    </location>
</feature>
<feature type="active site" description="Proton donor" evidence="1">
    <location>
        <position position="194"/>
    </location>
</feature>
<feature type="binding site" evidence="1">
    <location>
        <begin position="86"/>
        <end position="88"/>
    </location>
    <ligand>
        <name>substrate</name>
    </ligand>
</feature>
<feature type="binding site" evidence="1">
    <location>
        <begin position="88"/>
        <end position="89"/>
    </location>
    <ligand>
        <name>NADPH</name>
        <dbReference type="ChEBI" id="CHEBI:57783"/>
    </ligand>
</feature>
<feature type="binding site" evidence="1">
    <location>
        <begin position="226"/>
        <end position="227"/>
    </location>
    <ligand>
        <name>substrate</name>
    </ligand>
</feature>
<feature type="binding site" evidence="1">
    <location>
        <begin position="255"/>
        <end position="256"/>
    </location>
    <ligand>
        <name>NADPH</name>
        <dbReference type="ChEBI" id="CHEBI:57783"/>
    </ligand>
</feature>
<keyword id="KW-0963">Cytoplasm</keyword>
<keyword id="KW-0521">NADP</keyword>
<keyword id="KW-0560">Oxidoreductase</keyword>
<keyword id="KW-0671">Queuosine biosynthesis</keyword>
<organism>
    <name type="scientific">Actinobacillus pleuropneumoniae serotype 3 (strain JL03)</name>
    <dbReference type="NCBI Taxonomy" id="434271"/>
    <lineage>
        <taxon>Bacteria</taxon>
        <taxon>Pseudomonadati</taxon>
        <taxon>Pseudomonadota</taxon>
        <taxon>Gammaproteobacteria</taxon>
        <taxon>Pasteurellales</taxon>
        <taxon>Pasteurellaceae</taxon>
        <taxon>Actinobacillus</taxon>
    </lineage>
</organism>
<dbReference type="EC" id="1.7.1.13" evidence="1"/>
<dbReference type="EMBL" id="CP000687">
    <property type="protein sequence ID" value="ABY69412.1"/>
    <property type="molecule type" value="Genomic_DNA"/>
</dbReference>
<dbReference type="RefSeq" id="WP_005604488.1">
    <property type="nucleotide sequence ID" value="NC_010278.1"/>
</dbReference>
<dbReference type="SMR" id="B0BPC7"/>
<dbReference type="KEGG" id="apj:APJL_0854"/>
<dbReference type="HOGENOM" id="CLU_054738_0_0_6"/>
<dbReference type="UniPathway" id="UPA00392"/>
<dbReference type="Proteomes" id="UP000008547">
    <property type="component" value="Chromosome"/>
</dbReference>
<dbReference type="GO" id="GO:0005737">
    <property type="term" value="C:cytoplasm"/>
    <property type="evidence" value="ECO:0007669"/>
    <property type="project" value="UniProtKB-SubCell"/>
</dbReference>
<dbReference type="GO" id="GO:0033739">
    <property type="term" value="F:preQ1 synthase activity"/>
    <property type="evidence" value="ECO:0007669"/>
    <property type="project" value="UniProtKB-UniRule"/>
</dbReference>
<dbReference type="GO" id="GO:0008616">
    <property type="term" value="P:queuosine biosynthetic process"/>
    <property type="evidence" value="ECO:0007669"/>
    <property type="project" value="UniProtKB-UniRule"/>
</dbReference>
<dbReference type="GO" id="GO:0006400">
    <property type="term" value="P:tRNA modification"/>
    <property type="evidence" value="ECO:0007669"/>
    <property type="project" value="UniProtKB-UniRule"/>
</dbReference>
<dbReference type="Gene3D" id="3.30.1130.10">
    <property type="match status" value="2"/>
</dbReference>
<dbReference type="HAMAP" id="MF_00817">
    <property type="entry name" value="QueF_type2"/>
    <property type="match status" value="1"/>
</dbReference>
<dbReference type="InterPro" id="IPR043133">
    <property type="entry name" value="GTP-CH-I_C/QueF"/>
</dbReference>
<dbReference type="InterPro" id="IPR050084">
    <property type="entry name" value="NADPH_dep_7-cyano-7-deazaG_red"/>
</dbReference>
<dbReference type="InterPro" id="IPR029500">
    <property type="entry name" value="QueF"/>
</dbReference>
<dbReference type="InterPro" id="IPR029139">
    <property type="entry name" value="QueF_N"/>
</dbReference>
<dbReference type="InterPro" id="IPR016428">
    <property type="entry name" value="QueF_type2"/>
</dbReference>
<dbReference type="NCBIfam" id="TIGR03138">
    <property type="entry name" value="QueF"/>
    <property type="match status" value="1"/>
</dbReference>
<dbReference type="PANTHER" id="PTHR34354">
    <property type="entry name" value="NADPH-DEPENDENT 7-CYANO-7-DEAZAGUANINE REDUCTASE"/>
    <property type="match status" value="1"/>
</dbReference>
<dbReference type="PANTHER" id="PTHR34354:SF1">
    <property type="entry name" value="NADPH-DEPENDENT 7-CYANO-7-DEAZAGUANINE REDUCTASE"/>
    <property type="match status" value="1"/>
</dbReference>
<dbReference type="Pfam" id="PF14489">
    <property type="entry name" value="QueF"/>
    <property type="match status" value="1"/>
</dbReference>
<dbReference type="Pfam" id="PF14819">
    <property type="entry name" value="QueF_N"/>
    <property type="match status" value="1"/>
</dbReference>
<dbReference type="PIRSF" id="PIRSF004750">
    <property type="entry name" value="Nitrile_oxidored_YqcD_prd"/>
    <property type="match status" value="1"/>
</dbReference>
<dbReference type="SUPFAM" id="SSF55620">
    <property type="entry name" value="Tetrahydrobiopterin biosynthesis enzymes-like"/>
    <property type="match status" value="1"/>
</dbReference>
<proteinExistence type="inferred from homology"/>
<sequence length="279" mass="32104">MNYNDKSLSALKLGQKTEYKSEYDPTLLQPVPRKLNRDGLGITEQQPFDRGADVWTCYELSWLNENGLPQVAIADVAIDFRSENLIESKSFKLYLNSFNQTKFASLEQVEQALAKDLSQCASGQVSVKVYKLSAYTRQPIVDFAGECIDEQDIQIDSYEFSNEHLASVAEGEIVEETLVSHLLKSNCLITSQPDWGSVQIHYIGKKLNREKLLRYLVSFREHNEFHEQCVERIFTDLIQFTQPEKLTVYARYTRRGGLDINPFRSNFEAVPQNLRMARQ</sequence>
<evidence type="ECO:0000255" key="1">
    <source>
        <dbReference type="HAMAP-Rule" id="MF_00817"/>
    </source>
</evidence>